<organism>
    <name type="scientific">Bacillus cereus (strain 03BB102)</name>
    <dbReference type="NCBI Taxonomy" id="572264"/>
    <lineage>
        <taxon>Bacteria</taxon>
        <taxon>Bacillati</taxon>
        <taxon>Bacillota</taxon>
        <taxon>Bacilli</taxon>
        <taxon>Bacillales</taxon>
        <taxon>Bacillaceae</taxon>
        <taxon>Bacillus</taxon>
        <taxon>Bacillus cereus group</taxon>
    </lineage>
</organism>
<feature type="chain" id="PRO_1000190191" description="Glycine cleavage system H protein">
    <location>
        <begin position="1"/>
        <end position="127"/>
    </location>
</feature>
<feature type="domain" description="Lipoyl-binding" evidence="2">
    <location>
        <begin position="22"/>
        <end position="104"/>
    </location>
</feature>
<feature type="modified residue" description="N6-lipoyllysine" evidence="1">
    <location>
        <position position="63"/>
    </location>
</feature>
<sequence>MSIPNNLRYSEEHEWVKTEGNEVVIGITHFAQNELGDIVFVELPEVGATIEADEPFGSVESVKTVSELYAPVSGKVVAVNEELSDQPELVNESPYEGAWMVKVELSDASQVEKLLTAEKYAEMTNQD</sequence>
<protein>
    <recommendedName>
        <fullName evidence="1">Glycine cleavage system H protein</fullName>
    </recommendedName>
    <alternativeName>
        <fullName evidence="1">Octanoyl/lipoyl carrier protein</fullName>
    </alternativeName>
</protein>
<gene>
    <name evidence="1" type="primary">gcvH</name>
    <name type="ordered locus">BCA_5126</name>
</gene>
<reference key="1">
    <citation type="submission" date="2009-02" db="EMBL/GenBank/DDBJ databases">
        <title>Genome sequence of Bacillus cereus 03BB102.</title>
        <authorList>
            <person name="Dodson R.J."/>
            <person name="Jackson P."/>
            <person name="Munk A.C."/>
            <person name="Brettin T."/>
            <person name="Bruce D."/>
            <person name="Detter C."/>
            <person name="Tapia R."/>
            <person name="Han C."/>
            <person name="Sutton G."/>
            <person name="Sims D."/>
        </authorList>
    </citation>
    <scope>NUCLEOTIDE SEQUENCE [LARGE SCALE GENOMIC DNA]</scope>
    <source>
        <strain>03BB102</strain>
    </source>
</reference>
<evidence type="ECO:0000255" key="1">
    <source>
        <dbReference type="HAMAP-Rule" id="MF_00272"/>
    </source>
</evidence>
<evidence type="ECO:0000255" key="2">
    <source>
        <dbReference type="PROSITE-ProRule" id="PRU01066"/>
    </source>
</evidence>
<comment type="function">
    <text evidence="1">The glycine cleavage system catalyzes the degradation of glycine. The H protein shuttles the methylamine group of glycine from the P protein to the T protein.</text>
</comment>
<comment type="function">
    <text evidence="1">Is also involved in protein lipoylation via its role as an octanoyl/lipoyl carrier protein intermediate.</text>
</comment>
<comment type="cofactor">
    <cofactor evidence="1">
        <name>(R)-lipoate</name>
        <dbReference type="ChEBI" id="CHEBI:83088"/>
    </cofactor>
    <text evidence="1">Binds 1 lipoyl cofactor covalently.</text>
</comment>
<comment type="subunit">
    <text evidence="1">The glycine cleavage system is composed of four proteins: P, T, L and H.</text>
</comment>
<comment type="similarity">
    <text evidence="1">Belongs to the GcvH family.</text>
</comment>
<dbReference type="EMBL" id="CP001407">
    <property type="protein sequence ID" value="ACO29153.1"/>
    <property type="molecule type" value="Genomic_DNA"/>
</dbReference>
<dbReference type="RefSeq" id="WP_000026899.1">
    <property type="nucleotide sequence ID" value="NZ_CP009318.1"/>
</dbReference>
<dbReference type="SMR" id="C1EY77"/>
<dbReference type="GeneID" id="45024848"/>
<dbReference type="KEGG" id="bcx:BCA_5126"/>
<dbReference type="PATRIC" id="fig|572264.18.peg.5047"/>
<dbReference type="Proteomes" id="UP000002210">
    <property type="component" value="Chromosome"/>
</dbReference>
<dbReference type="GO" id="GO:0005829">
    <property type="term" value="C:cytosol"/>
    <property type="evidence" value="ECO:0007669"/>
    <property type="project" value="TreeGrafter"/>
</dbReference>
<dbReference type="GO" id="GO:0005960">
    <property type="term" value="C:glycine cleavage complex"/>
    <property type="evidence" value="ECO:0007669"/>
    <property type="project" value="InterPro"/>
</dbReference>
<dbReference type="GO" id="GO:0019464">
    <property type="term" value="P:glycine decarboxylation via glycine cleavage system"/>
    <property type="evidence" value="ECO:0007669"/>
    <property type="project" value="UniProtKB-UniRule"/>
</dbReference>
<dbReference type="CDD" id="cd06848">
    <property type="entry name" value="GCS_H"/>
    <property type="match status" value="1"/>
</dbReference>
<dbReference type="Gene3D" id="2.40.50.100">
    <property type="match status" value="1"/>
</dbReference>
<dbReference type="HAMAP" id="MF_00272">
    <property type="entry name" value="GcvH"/>
    <property type="match status" value="1"/>
</dbReference>
<dbReference type="InterPro" id="IPR003016">
    <property type="entry name" value="2-oxoA_DH_lipoyl-BS"/>
</dbReference>
<dbReference type="InterPro" id="IPR000089">
    <property type="entry name" value="Biotin_lipoyl"/>
</dbReference>
<dbReference type="InterPro" id="IPR002930">
    <property type="entry name" value="GCV_H"/>
</dbReference>
<dbReference type="InterPro" id="IPR033753">
    <property type="entry name" value="GCV_H/Fam206"/>
</dbReference>
<dbReference type="InterPro" id="IPR017453">
    <property type="entry name" value="GCV_H_sub"/>
</dbReference>
<dbReference type="InterPro" id="IPR011053">
    <property type="entry name" value="Single_hybrid_motif"/>
</dbReference>
<dbReference type="NCBIfam" id="TIGR00527">
    <property type="entry name" value="gcvH"/>
    <property type="match status" value="1"/>
</dbReference>
<dbReference type="NCBIfam" id="NF002270">
    <property type="entry name" value="PRK01202.1"/>
    <property type="match status" value="1"/>
</dbReference>
<dbReference type="PANTHER" id="PTHR11715">
    <property type="entry name" value="GLYCINE CLEAVAGE SYSTEM H PROTEIN"/>
    <property type="match status" value="1"/>
</dbReference>
<dbReference type="PANTHER" id="PTHR11715:SF3">
    <property type="entry name" value="GLYCINE CLEAVAGE SYSTEM H PROTEIN-RELATED"/>
    <property type="match status" value="1"/>
</dbReference>
<dbReference type="Pfam" id="PF01597">
    <property type="entry name" value="GCV_H"/>
    <property type="match status" value="1"/>
</dbReference>
<dbReference type="SUPFAM" id="SSF51230">
    <property type="entry name" value="Single hybrid motif"/>
    <property type="match status" value="1"/>
</dbReference>
<dbReference type="PROSITE" id="PS50968">
    <property type="entry name" value="BIOTINYL_LIPOYL"/>
    <property type="match status" value="1"/>
</dbReference>
<dbReference type="PROSITE" id="PS00189">
    <property type="entry name" value="LIPOYL"/>
    <property type="match status" value="1"/>
</dbReference>
<name>GCSH_BACC3</name>
<accession>C1EY77</accession>
<keyword id="KW-0450">Lipoyl</keyword>
<proteinExistence type="inferred from homology"/>